<reference key="1">
    <citation type="journal article" date="1998" name="J. Biol. Chem.">
        <title>Liprins, a family of LAR transmembrane protein-tyrosine phosphatase-interacting proteins.</title>
        <authorList>
            <person name="Serra-Pages C."/>
            <person name="Medley Q.G."/>
            <person name="Tang M."/>
            <person name="Hart A."/>
            <person name="Streuli M."/>
        </authorList>
    </citation>
    <scope>NUCLEOTIDE SEQUENCE [MRNA] (ISOFORM 2)</scope>
    <scope>VARIANT LEU-148</scope>
    <scope>TISSUE SPECIFICITY</scope>
    <scope>FUNCTION</scope>
</reference>
<reference key="2">
    <citation type="journal article" date="1999" name="DNA Res.">
        <title>Prediction of the coding sequences of unidentified human genes. XV. The complete sequences of 100 new cDNA clones from brain which code for large proteins in vitro.</title>
        <authorList>
            <person name="Nagase T."/>
            <person name="Ishikawa K."/>
            <person name="Kikuno R."/>
            <person name="Hirosawa M."/>
            <person name="Nomura N."/>
            <person name="Ohara O."/>
        </authorList>
    </citation>
    <scope>NUCLEOTIDE SEQUENCE [LARGE SCALE MRNA] (ISOFORM 3)</scope>
    <scope>VARIANT LEU-148</scope>
    <source>
        <tissue>Brain</tissue>
    </source>
</reference>
<reference key="3">
    <citation type="journal article" date="2002" name="DNA Res.">
        <title>Construction of expression-ready cDNA clones for KIAA genes: manual curation of 330 KIAA cDNA clones.</title>
        <authorList>
            <person name="Nakajima D."/>
            <person name="Okazaki N."/>
            <person name="Yamakawa H."/>
            <person name="Kikuno R."/>
            <person name="Ohara O."/>
            <person name="Nagase T."/>
        </authorList>
    </citation>
    <scope>SEQUENCE REVISION</scope>
</reference>
<reference key="4">
    <citation type="submission" date="2000-03" db="EMBL/GenBank/DDBJ databases">
        <title>L2, a different isoform of Liprin beta 1, is expressed in high level in liver tissue.</title>
        <authorList>
            <person name="Junjian L."/>
            <person name="Cheng J."/>
            <person name="Rouli Z."/>
            <person name="Jie Z."/>
        </authorList>
    </citation>
    <scope>NUCLEOTIDE SEQUENCE [MRNA] (ISOFORM 5)</scope>
    <scope>VARIANT LEU-148</scope>
</reference>
<reference key="5">
    <citation type="submission" date="2000-09" db="EMBL/GenBank/DDBJ databases">
        <title>hSGT2, a liprin related human gene, restores the glycolytic gene expression of the gcr2 mutant of Saccharomyces cerevisiae.</title>
        <authorList>
            <person name="Sato T."/>
            <person name="Jigami Y."/>
            <person name="Uemura H."/>
        </authorList>
    </citation>
    <scope>NUCLEOTIDE SEQUENCE [MRNA] (ISOFORM 5)</scope>
    <scope>VARIANT LEU-148</scope>
    <source>
        <tissue>Brain</tissue>
    </source>
</reference>
<reference key="6">
    <citation type="journal article" date="2004" name="Genome Res.">
        <title>The status, quality, and expansion of the NIH full-length cDNA project: the Mammalian Gene Collection (MGC).</title>
        <authorList>
            <consortium name="The MGC Project Team"/>
        </authorList>
    </citation>
    <scope>NUCLEOTIDE SEQUENCE [LARGE SCALE MRNA] (ISOFORMS 1 AND 4)</scope>
    <scope>VARIANT LEU-148</scope>
    <source>
        <tissue>Brain</tissue>
        <tissue>Skin</tissue>
    </source>
</reference>
<reference key="7">
    <citation type="journal article" date="2002" name="J. Biol. Chem.">
        <title>Liprin beta 1, a member of the family of LAR transmembrane tyrosine phosphatase-interacting proteins, is a new target for the metastasis-associated protein S100A4 (Mts1).</title>
        <authorList>
            <person name="Kriajevska M."/>
            <person name="Fischer-Larsen M."/>
            <person name="Moertz E."/>
            <person name="Vorm O."/>
            <person name="Tulchinsky E."/>
            <person name="Grigorian M."/>
            <person name="Ambartsumian N."/>
            <person name="Lukanidin E."/>
        </authorList>
    </citation>
    <scope>INTERACTION WITH S100A4</scope>
</reference>
<reference key="8">
    <citation type="journal article" date="2006" name="Cell">
        <title>Global, in vivo, and site-specific phosphorylation dynamics in signaling networks.</title>
        <authorList>
            <person name="Olsen J.V."/>
            <person name="Blagoev B."/>
            <person name="Gnad F."/>
            <person name="Macek B."/>
            <person name="Kumar C."/>
            <person name="Mortensen P."/>
            <person name="Mann M."/>
        </authorList>
    </citation>
    <scope>IDENTIFICATION BY MASS SPECTROMETRY [LARGE SCALE ANALYSIS]</scope>
    <source>
        <tissue>Cervix carcinoma</tissue>
    </source>
</reference>
<reference key="9">
    <citation type="journal article" date="2008" name="Proc. Natl. Acad. Sci. U.S.A.">
        <title>A quantitative atlas of mitotic phosphorylation.</title>
        <authorList>
            <person name="Dephoure N."/>
            <person name="Zhou C."/>
            <person name="Villen J."/>
            <person name="Beausoleil S.A."/>
            <person name="Bakalarski C.E."/>
            <person name="Elledge S.J."/>
            <person name="Gygi S.P."/>
        </authorList>
    </citation>
    <scope>PHOSPHORYLATION [LARGE SCALE ANALYSIS] AT SER-37; THR-39; SER-40; SER-466; SER-579; SER-601; SER-999; SER-1001; SER-1003 AND THR-1005</scope>
    <scope>PHOSPHORYLATION [LARGE SCALE ANALYSIS] AT SER-523 (ISOFORM 2)</scope>
    <scope>IDENTIFICATION BY MASS SPECTROMETRY [LARGE SCALE ANALYSIS]</scope>
    <source>
        <tissue>Cervix carcinoma</tissue>
    </source>
</reference>
<reference key="10">
    <citation type="journal article" date="2009" name="Anal. Chem.">
        <title>Lys-N and trypsin cover complementary parts of the phosphoproteome in a refined SCX-based approach.</title>
        <authorList>
            <person name="Gauci S."/>
            <person name="Helbig A.O."/>
            <person name="Slijper M."/>
            <person name="Krijgsveld J."/>
            <person name="Heck A.J."/>
            <person name="Mohammed S."/>
        </authorList>
    </citation>
    <scope>IDENTIFICATION BY MASS SPECTROMETRY [LARGE SCALE ANALYSIS]</scope>
</reference>
<reference key="11">
    <citation type="journal article" date="2009" name="Sci. Signal.">
        <title>Quantitative phosphoproteomic analysis of T cell receptor signaling reveals system-wide modulation of protein-protein interactions.</title>
        <authorList>
            <person name="Mayya V."/>
            <person name="Lundgren D.H."/>
            <person name="Hwang S.-I."/>
            <person name="Rezaul K."/>
            <person name="Wu L."/>
            <person name="Eng J.K."/>
            <person name="Rodionov V."/>
            <person name="Han D.K."/>
        </authorList>
    </citation>
    <scope>PHOSPHORYLATION [LARGE SCALE ANALYSIS] AT SER-601</scope>
    <scope>IDENTIFICATION BY MASS SPECTROMETRY [LARGE SCALE ANALYSIS]</scope>
    <source>
        <tissue>Leukemic T-cell</tissue>
    </source>
</reference>
<reference key="12">
    <citation type="journal article" date="2009" name="Science">
        <title>Lysine acetylation targets protein complexes and co-regulates major cellular functions.</title>
        <authorList>
            <person name="Choudhary C."/>
            <person name="Kumar C."/>
            <person name="Gnad F."/>
            <person name="Nielsen M.L."/>
            <person name="Rehman M."/>
            <person name="Walther T.C."/>
            <person name="Olsen J.V."/>
            <person name="Mann M."/>
        </authorList>
    </citation>
    <scope>ACETYLATION [LARGE SCALE ANALYSIS] AT LYS-322</scope>
    <scope>IDENTIFICATION BY MASS SPECTROMETRY [LARGE SCALE ANALYSIS]</scope>
</reference>
<reference key="13">
    <citation type="journal article" date="2010" name="Sci. Signal.">
        <title>Quantitative phosphoproteomics reveals widespread full phosphorylation site occupancy during mitosis.</title>
        <authorList>
            <person name="Olsen J.V."/>
            <person name="Vermeulen M."/>
            <person name="Santamaria A."/>
            <person name="Kumar C."/>
            <person name="Miller M.L."/>
            <person name="Jensen L.J."/>
            <person name="Gnad F."/>
            <person name="Cox J."/>
            <person name="Jensen T.S."/>
            <person name="Nigg E.A."/>
            <person name="Brunak S."/>
            <person name="Mann M."/>
        </authorList>
    </citation>
    <scope>PHOSPHORYLATION [LARGE SCALE ANALYSIS] AT SER-37; SER-40; SER-999 AND SER-1001</scope>
    <scope>IDENTIFICATION BY MASS SPECTROMETRY [LARGE SCALE ANALYSIS]</scope>
    <source>
        <tissue>Cervix carcinoma</tissue>
    </source>
</reference>
<reference key="14">
    <citation type="journal article" date="2011" name="BMC Syst. Biol.">
        <title>Initial characterization of the human central proteome.</title>
        <authorList>
            <person name="Burkard T.R."/>
            <person name="Planyavsky M."/>
            <person name="Kaupe I."/>
            <person name="Breitwieser F.P."/>
            <person name="Buerckstuemmer T."/>
            <person name="Bennett K.L."/>
            <person name="Superti-Furga G."/>
            <person name="Colinge J."/>
        </authorList>
    </citation>
    <scope>IDENTIFICATION BY MASS SPECTROMETRY [LARGE SCALE ANALYSIS]</scope>
</reference>
<reference key="15">
    <citation type="journal article" date="2011" name="Sci. Signal.">
        <title>System-wide temporal characterization of the proteome and phosphoproteome of human embryonic stem cell differentiation.</title>
        <authorList>
            <person name="Rigbolt K.T."/>
            <person name="Prokhorova T.A."/>
            <person name="Akimov V."/>
            <person name="Henningsen J."/>
            <person name="Johansen P.T."/>
            <person name="Kratchmarova I."/>
            <person name="Kassem M."/>
            <person name="Mann M."/>
            <person name="Olsen J.V."/>
            <person name="Blagoev B."/>
        </authorList>
    </citation>
    <scope>PHOSPHORYLATION [LARGE SCALE ANALYSIS] AT SER-999</scope>
    <scope>IDENTIFICATION BY MASS SPECTROMETRY [LARGE SCALE ANALYSIS]</scope>
</reference>
<reference key="16">
    <citation type="journal article" date="2013" name="Dev. Cell">
        <title>CFEOM1-associated kinesin KIF21A is a cortical microtubule growth inhibitor.</title>
        <authorList>
            <person name="van der Vaart B."/>
            <person name="van Riel W.E."/>
            <person name="Doodhi H."/>
            <person name="Kevenaar J.T."/>
            <person name="Katrukha E.A."/>
            <person name="Gumy L."/>
            <person name="Bouchet B.P."/>
            <person name="Grigoriev I."/>
            <person name="Spangler S.A."/>
            <person name="Yu K.L."/>
            <person name="Wulf P.S."/>
            <person name="Wu J."/>
            <person name="Lansbergen G."/>
            <person name="van Battum E.Y."/>
            <person name="Pasterkamp R.J."/>
            <person name="Mimori-Kiyosue Y."/>
            <person name="Demmers J."/>
            <person name="Olieric N."/>
            <person name="Maly I.V."/>
            <person name="Hoogenraad C.C."/>
            <person name="Akhmanova A."/>
        </authorList>
    </citation>
    <scope>INTERACTION WITH KANK1</scope>
    <scope>SUBCELLULAR LOCATION</scope>
</reference>
<reference key="17">
    <citation type="journal article" date="2013" name="J. Proteome Res.">
        <title>Toward a comprehensive characterization of a human cancer cell phosphoproteome.</title>
        <authorList>
            <person name="Zhou H."/>
            <person name="Di Palma S."/>
            <person name="Preisinger C."/>
            <person name="Peng M."/>
            <person name="Polat A.N."/>
            <person name="Heck A.J."/>
            <person name="Mohammed S."/>
        </authorList>
    </citation>
    <scope>PHOSPHORYLATION [LARGE SCALE ANALYSIS] AT SER-540; SER-601 AND SER-794</scope>
    <scope>IDENTIFICATION BY MASS SPECTROMETRY [LARGE SCALE ANALYSIS]</scope>
    <source>
        <tissue>Cervix carcinoma</tissue>
        <tissue>Erythroleukemia</tissue>
    </source>
</reference>
<reference key="18">
    <citation type="journal article" date="2014" name="J. Proteomics">
        <title>An enzyme assisted RP-RPLC approach for in-depth analysis of human liver phosphoproteome.</title>
        <authorList>
            <person name="Bian Y."/>
            <person name="Song C."/>
            <person name="Cheng K."/>
            <person name="Dong M."/>
            <person name="Wang F."/>
            <person name="Huang J."/>
            <person name="Sun D."/>
            <person name="Wang L."/>
            <person name="Ye M."/>
            <person name="Zou H."/>
        </authorList>
    </citation>
    <scope>PHOSPHORYLATION [LARGE SCALE ANALYSIS] AT SER-466; SER-540 AND SER-794</scope>
    <scope>IDENTIFICATION BY MASS SPECTROMETRY [LARGE SCALE ANALYSIS]</scope>
    <source>
        <tissue>Liver</tissue>
    </source>
</reference>
<reference key="19">
    <citation type="journal article" date="2016" name="Elife">
        <title>Talin-KANK1 interaction controls the recruitment of cortical microtubule stabilizing complexes to focal adhesions.</title>
        <authorList>
            <person name="Bouchet B.P."/>
            <person name="Gough R.E."/>
            <person name="Ammon Y.C."/>
            <person name="van de Willige D."/>
            <person name="Post H."/>
            <person name="Jacquemet G."/>
            <person name="Altelaar A.M."/>
            <person name="Heck A.J."/>
            <person name="Goult B.T."/>
            <person name="Akhmanova A."/>
        </authorList>
    </citation>
    <scope>SUBUNIT</scope>
    <scope>INTERACTION WITH KANK1</scope>
</reference>
<reference key="20">
    <citation type="journal article" date="2017" name="Nat. Struct. Mol. Biol.">
        <title>Site-specific mapping of the human SUMO proteome reveals co-modification with phosphorylation.</title>
        <authorList>
            <person name="Hendriks I.A."/>
            <person name="Lyon D."/>
            <person name="Young C."/>
            <person name="Jensen L.J."/>
            <person name="Vertegaal A.C."/>
            <person name="Nielsen M.L."/>
        </authorList>
    </citation>
    <scope>SUMOYLATION [LARGE SCALE ANALYSIS] AT LYS-471</scope>
    <scope>IDENTIFICATION BY MASS SPECTROMETRY [LARGE SCALE ANALYSIS]</scope>
</reference>
<reference key="21">
    <citation type="journal article" date="2022" name="Am. J. Hum. Genet.">
        <title>Bi-allelic loss-of-function variants in PPFIBP1 cause a neurodevelopmental disorder with microcephaly, epilepsy, and periventricular calcifications.</title>
        <authorList>
            <person name="Rosenhahn E."/>
            <person name="O'Brien T.J."/>
            <person name="Zaki M.S."/>
            <person name="Sorge I."/>
            <person name="Wieczorek D."/>
            <person name="Rostasy K."/>
            <person name="Vitobello A."/>
            <person name="Nambot S."/>
            <person name="Alkuraya F.S."/>
            <person name="Hashem M.O."/>
            <person name="Alhashem A."/>
            <person name="Tabarki B."/>
            <person name="Alamri A.S."/>
            <person name="Al Safar A.H."/>
            <person name="Bubshait D.K."/>
            <person name="Alahmady N.F."/>
            <person name="Gleeson J.G."/>
            <person name="Abdel-Hamid M.S."/>
            <person name="Lesko N."/>
            <person name="Ygberg S."/>
            <person name="Correia S.P."/>
            <person name="Wredenberg A."/>
            <person name="Alavi S."/>
            <person name="Seyedhassani S.M."/>
            <person name="Ebrahimi Nasab M."/>
            <person name="Hussien H."/>
            <person name="Omar T.E.I."/>
            <person name="Harzallah I."/>
            <person name="Touraine R."/>
            <person name="Tajsharghi H."/>
            <person name="Morsy H."/>
            <person name="Houlden H."/>
            <person name="Shahrooei M."/>
            <person name="Ghavideldarestani M."/>
            <person name="Abdel-Salam G.M.H."/>
            <person name="Torella A."/>
            <person name="Zanobio M."/>
            <person name="Terrone G."/>
            <person name="Brunetti-Pierri N."/>
            <person name="Omrani A."/>
            <person name="Hentschel J."/>
            <person name="Lemke J.R."/>
            <person name="Sticht H."/>
            <person name="Abou Jamra R."/>
            <person name="Brown A.E.X."/>
            <person name="Maroofian R."/>
            <person name="Platzer K."/>
        </authorList>
    </citation>
    <scope>INVOLVEMENT IN NEDSMBA</scope>
    <scope>VARIANTS NEDSMBA 135-ARG--VAL-1011 DEL; 451-GLN--VAL-1011 DEL; 507-GLN--VAL-1011 DEL; VAL-732; 811-ARG--VAL-1011 DEL AND 883-ARG--VAL-1011 DEL</scope>
</reference>
<accession>Q86W92</accession>
<accession>O75336</accession>
<accession>Q86X70</accession>
<accession>Q9NY03</accession>
<accession>Q9ULJ0</accession>
<name>LIPB1_HUMAN</name>
<sequence>MMSDASDMLAAALEQMDGIIAGSKALEYSNGIFDCQSPTSPFMGSLRALHLVEDLRGLLEMMETDEKEGLRCQIPDSTAETLVEWLQSQMTNGHLPGNGDVYQERLARLENDKESLVLQVSVLTDQVEAQGEKIRDLEFCLEEHREKVNATEEMLQQELLSRTSLETQKLDLMAEISNLKLKLTAVEKDRLDYEDKFRDTEGLIQEINDLRLKVSEMDSERLQYEKKLKSTKSLMAKLSSMKIKVGQMQYEKQRMEQKWESLKDELASLKEQLEEKESEVKRLQEKLVCKMKGEGVEIVDRDIEVQKMKKAVESLMAANEEKDRKIEDLRQCLNRYKKMQDTVVLAQGKDGEYEELLNSSSISSLLDAQGFSDLEKSPSPTPVMGSPSCDPFNTSVPEEFHTTILQVSIPSLLPATVSMETSEKSKLTPKPETSFEENDGNIILGATVDTQLCDKLLTSSLQKSSSLGNLKKETSDGEKETIQKTSEDRAPAESRPFGTLPPRPPGQDTSMDDNPFGTRKVRSSFGRGFFKIKSNKRTASAPNLAETEKETAEHLDLAGASSRPKDSQRNSPFQIPPPSPDSKKKSRGIMKLFGKLRRSQSTTFNPDDMSEPEFKRGGTRATAGPRLGWSRDLGQSNSDLDMPFAKWTKEQVCNWLMEQGLGSYLNSGKHWIASGQTLLQASQQDLEKELGIKHSLHRKKLQLALQALGSEEETNHGKLDFNWVTRWLDDIGLPQYKTQFDEGRVDGRMLHYMTVDDLLSLKVVSVLHHLSIKRAIQVLRINNFEPNCLRRRPSDENTIAPSEVQKWTNHRVMEWLRSVDLAEYAPNLRGSGVHGGLMVLEPRFNVETMAQLLNIPPNKTLLRRHLATHFNLLIGAEAQHQKRDAMELPDYVLLTATAKVKPKKLAFSNFGNLRKKKQEDGEEYVCPMELGQASGSASKKGFKPGLDMRLYEEDDLDRLEQMEDSEGTVRQIGAFSEGINNLTHMLKEDDMFKDFAARSPSASITDEDSNV</sequence>
<organism>
    <name type="scientific">Homo sapiens</name>
    <name type="common">Human</name>
    <dbReference type="NCBI Taxonomy" id="9606"/>
    <lineage>
        <taxon>Eukaryota</taxon>
        <taxon>Metazoa</taxon>
        <taxon>Chordata</taxon>
        <taxon>Craniata</taxon>
        <taxon>Vertebrata</taxon>
        <taxon>Euteleostomi</taxon>
        <taxon>Mammalia</taxon>
        <taxon>Eutheria</taxon>
        <taxon>Euarchontoglires</taxon>
        <taxon>Primates</taxon>
        <taxon>Haplorrhini</taxon>
        <taxon>Catarrhini</taxon>
        <taxon>Hominidae</taxon>
        <taxon>Homo</taxon>
    </lineage>
</organism>
<evidence type="ECO:0000250" key="1">
    <source>
        <dbReference type="UniProtKB" id="Q8C8U0"/>
    </source>
</evidence>
<evidence type="ECO:0000255" key="2"/>
<evidence type="ECO:0000255" key="3">
    <source>
        <dbReference type="PROSITE-ProRule" id="PRU00184"/>
    </source>
</evidence>
<evidence type="ECO:0000256" key="4">
    <source>
        <dbReference type="SAM" id="MobiDB-lite"/>
    </source>
</evidence>
<evidence type="ECO:0000269" key="5">
    <source>
    </source>
</evidence>
<evidence type="ECO:0000269" key="6">
    <source>
    </source>
</evidence>
<evidence type="ECO:0000269" key="7">
    <source>
    </source>
</evidence>
<evidence type="ECO:0000269" key="8">
    <source>
    </source>
</evidence>
<evidence type="ECO:0000269" key="9">
    <source>
    </source>
</evidence>
<evidence type="ECO:0000269" key="10">
    <source>
    </source>
</evidence>
<evidence type="ECO:0000269" key="11">
    <source>
    </source>
</evidence>
<evidence type="ECO:0000269" key="12">
    <source ref="4"/>
</evidence>
<evidence type="ECO:0000269" key="13">
    <source ref="5"/>
</evidence>
<evidence type="ECO:0000303" key="14">
    <source>
    </source>
</evidence>
<evidence type="ECO:0000303" key="15">
    <source>
    </source>
</evidence>
<evidence type="ECO:0000303" key="16">
    <source>
    </source>
</evidence>
<evidence type="ECO:0000303" key="17">
    <source ref="4"/>
</evidence>
<evidence type="ECO:0000303" key="18">
    <source ref="5"/>
</evidence>
<evidence type="ECO:0000305" key="19"/>
<evidence type="ECO:0007744" key="20">
    <source>
    </source>
</evidence>
<evidence type="ECO:0007744" key="21">
    <source>
    </source>
</evidence>
<evidence type="ECO:0007744" key="22">
    <source>
    </source>
</evidence>
<evidence type="ECO:0007744" key="23">
    <source>
    </source>
</evidence>
<evidence type="ECO:0007744" key="24">
    <source>
    </source>
</evidence>
<evidence type="ECO:0007744" key="25">
    <source>
    </source>
</evidence>
<evidence type="ECO:0007744" key="26">
    <source>
    </source>
</evidence>
<evidence type="ECO:0007744" key="27">
    <source>
    </source>
</evidence>
<keyword id="KW-0007">Acetylation</keyword>
<keyword id="KW-0025">Alternative splicing</keyword>
<keyword id="KW-0175">Coiled coil</keyword>
<keyword id="KW-0963">Cytoplasm</keyword>
<keyword id="KW-0225">Disease variant</keyword>
<keyword id="KW-0887">Epilepsy</keyword>
<keyword id="KW-0991">Intellectual disability</keyword>
<keyword id="KW-1017">Isopeptide bond</keyword>
<keyword id="KW-0597">Phosphoprotein</keyword>
<keyword id="KW-1267">Proteomics identification</keyword>
<keyword id="KW-1185">Reference proteome</keyword>
<keyword id="KW-0677">Repeat</keyword>
<keyword id="KW-0832">Ubl conjugation</keyword>
<dbReference type="EMBL" id="AF034802">
    <property type="protein sequence ID" value="AAC26103.1"/>
    <property type="molecule type" value="mRNA"/>
</dbReference>
<dbReference type="EMBL" id="AB033056">
    <property type="protein sequence ID" value="BAA86544.2"/>
    <property type="status" value="ALT_INIT"/>
    <property type="molecule type" value="mRNA"/>
</dbReference>
<dbReference type="EMBL" id="AJ276680">
    <property type="protein sequence ID" value="CAB77544.1"/>
    <property type="molecule type" value="mRNA"/>
</dbReference>
<dbReference type="EMBL" id="AB049149">
    <property type="protein sequence ID" value="BAB39690.1"/>
    <property type="molecule type" value="mRNA"/>
</dbReference>
<dbReference type="EMBL" id="BC046159">
    <property type="protein sequence ID" value="AAH46159.1"/>
    <property type="status" value="ALT_INIT"/>
    <property type="molecule type" value="mRNA"/>
</dbReference>
<dbReference type="EMBL" id="BC050281">
    <property type="protein sequence ID" value="AAH50281.1"/>
    <property type="molecule type" value="mRNA"/>
</dbReference>
<dbReference type="CCDS" id="CCDS55812.1">
    <molecule id="Q86W92-1"/>
</dbReference>
<dbReference type="CCDS" id="CCDS55813.1">
    <molecule id="Q86W92-4"/>
</dbReference>
<dbReference type="CCDS" id="CCDS55814.1">
    <molecule id="Q86W92-3"/>
</dbReference>
<dbReference type="CCDS" id="CCDS8713.1">
    <molecule id="Q86W92-2"/>
</dbReference>
<dbReference type="RefSeq" id="NP_001185844.1">
    <molecule id="Q86W92-3"/>
    <property type="nucleotide sequence ID" value="NM_001198915.2"/>
</dbReference>
<dbReference type="RefSeq" id="NP_001185845.2">
    <molecule id="Q86W92-4"/>
    <property type="nucleotide sequence ID" value="NM_001198916.2"/>
</dbReference>
<dbReference type="RefSeq" id="NP_003613.3">
    <molecule id="Q86W92-2"/>
    <property type="nucleotide sequence ID" value="NM_003622.3"/>
</dbReference>
<dbReference type="RefSeq" id="NP_803193.3">
    <molecule id="Q86W92-1"/>
    <property type="nucleotide sequence ID" value="NM_177444.3"/>
</dbReference>
<dbReference type="RefSeq" id="XP_047285709.1">
    <molecule id="Q86W92-2"/>
    <property type="nucleotide sequence ID" value="XM_047429753.1"/>
</dbReference>
<dbReference type="SMR" id="Q86W92"/>
<dbReference type="BioGRID" id="114068">
    <property type="interactions" value="199"/>
</dbReference>
<dbReference type="DIP" id="DIP-42195N"/>
<dbReference type="FunCoup" id="Q86W92">
    <property type="interactions" value="1064"/>
</dbReference>
<dbReference type="IntAct" id="Q86W92">
    <property type="interactions" value="86"/>
</dbReference>
<dbReference type="MINT" id="Q86W92"/>
<dbReference type="STRING" id="9606.ENSP00000314724"/>
<dbReference type="GlyGen" id="Q86W92">
    <property type="glycosylation" value="3 sites, 1 O-linked glycan (2 sites)"/>
</dbReference>
<dbReference type="iPTMnet" id="Q86W92"/>
<dbReference type="MetOSite" id="Q86W92"/>
<dbReference type="PhosphoSitePlus" id="Q86W92"/>
<dbReference type="BioMuta" id="PPFIBP1"/>
<dbReference type="DMDM" id="90185247"/>
<dbReference type="jPOST" id="Q86W92"/>
<dbReference type="MassIVE" id="Q86W92"/>
<dbReference type="PaxDb" id="9606-ENSP00000314724"/>
<dbReference type="PeptideAtlas" id="Q86W92"/>
<dbReference type="ProteomicsDB" id="70131">
    <molecule id="Q86W92-1"/>
</dbReference>
<dbReference type="ProteomicsDB" id="70132">
    <molecule id="Q86W92-2"/>
</dbReference>
<dbReference type="ProteomicsDB" id="70133">
    <molecule id="Q86W92-3"/>
</dbReference>
<dbReference type="ProteomicsDB" id="70134">
    <molecule id="Q86W92-4"/>
</dbReference>
<dbReference type="ProteomicsDB" id="70135">
    <molecule id="Q86W92-5"/>
</dbReference>
<dbReference type="Pumba" id="Q86W92"/>
<dbReference type="Antibodypedia" id="1098">
    <property type="antibodies" value="160 antibodies from 29 providers"/>
</dbReference>
<dbReference type="DNASU" id="8496"/>
<dbReference type="Ensembl" id="ENST00000228425.11">
    <molecule id="Q86W92-2"/>
    <property type="protein sequence ID" value="ENSP00000228425.6"/>
    <property type="gene ID" value="ENSG00000110841.14"/>
</dbReference>
<dbReference type="Ensembl" id="ENST00000318304.12">
    <molecule id="Q86W92-1"/>
    <property type="protein sequence ID" value="ENSP00000314724.8"/>
    <property type="gene ID" value="ENSG00000110841.14"/>
</dbReference>
<dbReference type="Ensembl" id="ENST00000535047.5">
    <molecule id="Q86W92-5"/>
    <property type="protein sequence ID" value="ENSP00000444046.1"/>
    <property type="gene ID" value="ENSG00000110841.14"/>
</dbReference>
<dbReference type="Ensembl" id="ENST00000537927.5">
    <molecule id="Q86W92-3"/>
    <property type="protein sequence ID" value="ENSP00000445425.1"/>
    <property type="gene ID" value="ENSG00000110841.14"/>
</dbReference>
<dbReference type="Ensembl" id="ENST00000542629.5">
    <molecule id="Q86W92-4"/>
    <property type="protein sequence ID" value="ENSP00000443442.1"/>
    <property type="gene ID" value="ENSG00000110841.14"/>
</dbReference>
<dbReference type="GeneID" id="8496"/>
<dbReference type="KEGG" id="hsa:8496"/>
<dbReference type="MANE-Select" id="ENST00000228425.11">
    <molecule id="Q86W92-2"/>
    <property type="protein sequence ID" value="ENSP00000228425.6"/>
    <property type="RefSeq nucleotide sequence ID" value="NM_003622.4"/>
    <property type="RefSeq protein sequence ID" value="NP_003613.4"/>
</dbReference>
<dbReference type="UCSC" id="uc001rhz.3">
    <molecule id="Q86W92-1"/>
    <property type="organism name" value="human"/>
</dbReference>
<dbReference type="AGR" id="HGNC:9249"/>
<dbReference type="CTD" id="8496"/>
<dbReference type="DisGeNET" id="8496"/>
<dbReference type="GeneCards" id="PPFIBP1"/>
<dbReference type="HGNC" id="HGNC:9249">
    <property type="gene designation" value="PPFIBP1"/>
</dbReference>
<dbReference type="HPA" id="ENSG00000110841">
    <property type="expression patterns" value="Low tissue specificity"/>
</dbReference>
<dbReference type="MalaCards" id="PPFIBP1"/>
<dbReference type="MIM" id="603141">
    <property type="type" value="gene"/>
</dbReference>
<dbReference type="MIM" id="620024">
    <property type="type" value="phenotype"/>
</dbReference>
<dbReference type="neXtProt" id="NX_Q86W92"/>
<dbReference type="OpenTargets" id="ENSG00000110841"/>
<dbReference type="PharmGKB" id="PA33570"/>
<dbReference type="VEuPathDB" id="HostDB:ENSG00000110841"/>
<dbReference type="eggNOG" id="KOG1899">
    <property type="taxonomic scope" value="Eukaryota"/>
</dbReference>
<dbReference type="GeneTree" id="ENSGT01050000244951"/>
<dbReference type="HOGENOM" id="CLU_011689_2_0_1"/>
<dbReference type="InParanoid" id="Q86W92"/>
<dbReference type="OMA" id="WSNSGTP"/>
<dbReference type="OrthoDB" id="6516566at2759"/>
<dbReference type="PAN-GO" id="Q86W92">
    <property type="GO annotations" value="2 GO annotations based on evolutionary models"/>
</dbReference>
<dbReference type="PhylomeDB" id="Q86W92"/>
<dbReference type="TreeFam" id="TF314207"/>
<dbReference type="PathwayCommons" id="Q86W92"/>
<dbReference type="Reactome" id="R-HSA-388844">
    <property type="pathway name" value="Receptor-type tyrosine-protein phosphatases"/>
</dbReference>
<dbReference type="Reactome" id="R-HSA-9725370">
    <property type="pathway name" value="Signaling by ALK fusions and activated point mutants"/>
</dbReference>
<dbReference type="SignaLink" id="Q86W92"/>
<dbReference type="BioGRID-ORCS" id="8496">
    <property type="hits" value="15 hits in 1146 CRISPR screens"/>
</dbReference>
<dbReference type="ChiTaRS" id="PPFIBP1">
    <property type="organism name" value="human"/>
</dbReference>
<dbReference type="GeneWiki" id="PPFIBP1"/>
<dbReference type="GenomeRNAi" id="8496"/>
<dbReference type="Pharos" id="Q86W92">
    <property type="development level" value="Tbio"/>
</dbReference>
<dbReference type="PRO" id="PR:Q86W92"/>
<dbReference type="Proteomes" id="UP000005640">
    <property type="component" value="Chromosome 12"/>
</dbReference>
<dbReference type="RNAct" id="Q86W92">
    <property type="molecule type" value="protein"/>
</dbReference>
<dbReference type="Bgee" id="ENSG00000110841">
    <property type="expression patterns" value="Expressed in tendon of biceps brachii and 207 other cell types or tissues"/>
</dbReference>
<dbReference type="ExpressionAtlas" id="Q86W92">
    <property type="expression patterns" value="baseline and differential"/>
</dbReference>
<dbReference type="GO" id="GO:0005938">
    <property type="term" value="C:cell cortex"/>
    <property type="evidence" value="ECO:0000314"/>
    <property type="project" value="UniProtKB"/>
</dbReference>
<dbReference type="GO" id="GO:0005829">
    <property type="term" value="C:cytosol"/>
    <property type="evidence" value="ECO:0000304"/>
    <property type="project" value="Reactome"/>
</dbReference>
<dbReference type="GO" id="GO:0005925">
    <property type="term" value="C:focal adhesion"/>
    <property type="evidence" value="ECO:0007005"/>
    <property type="project" value="UniProtKB"/>
</dbReference>
<dbReference type="GO" id="GO:0005886">
    <property type="term" value="C:plasma membrane"/>
    <property type="evidence" value="ECO:0000314"/>
    <property type="project" value="HPA"/>
</dbReference>
<dbReference type="GO" id="GO:0048786">
    <property type="term" value="C:presynaptic active zone"/>
    <property type="evidence" value="ECO:0000318"/>
    <property type="project" value="GO_Central"/>
</dbReference>
<dbReference type="GO" id="GO:0045296">
    <property type="term" value="F:cadherin binding"/>
    <property type="evidence" value="ECO:0007005"/>
    <property type="project" value="BHF-UCL"/>
</dbReference>
<dbReference type="GO" id="GO:0007155">
    <property type="term" value="P:cell adhesion"/>
    <property type="evidence" value="ECO:0000304"/>
    <property type="project" value="ProtInc"/>
</dbReference>
<dbReference type="GO" id="GO:0043622">
    <property type="term" value="P:cortical microtubule organization"/>
    <property type="evidence" value="ECO:0000315"/>
    <property type="project" value="UniProtKB"/>
</dbReference>
<dbReference type="GO" id="GO:0007528">
    <property type="term" value="P:neuromuscular junction development"/>
    <property type="evidence" value="ECO:0000318"/>
    <property type="project" value="GO_Central"/>
</dbReference>
<dbReference type="CDD" id="cd09563">
    <property type="entry name" value="SAM_liprin-beta1_2_repeat1"/>
    <property type="match status" value="1"/>
</dbReference>
<dbReference type="CDD" id="cd09566">
    <property type="entry name" value="SAM_liprin-beta1_2_repeat2"/>
    <property type="match status" value="1"/>
</dbReference>
<dbReference type="CDD" id="cd09569">
    <property type="entry name" value="SAM_liprin-beta1_2_repeat3"/>
    <property type="match status" value="1"/>
</dbReference>
<dbReference type="FunFam" id="1.10.150.50:FF:000005">
    <property type="entry name" value="Liprin-beta-1 isoform 1"/>
    <property type="match status" value="1"/>
</dbReference>
<dbReference type="FunFam" id="1.10.150.50:FF:000007">
    <property type="entry name" value="Liprin-beta-1 isoform 1"/>
    <property type="match status" value="1"/>
</dbReference>
<dbReference type="FunFam" id="1.10.150.50:FF:000017">
    <property type="entry name" value="Liprin-beta-1 isoform 1"/>
    <property type="match status" value="1"/>
</dbReference>
<dbReference type="Gene3D" id="1.10.150.50">
    <property type="entry name" value="Transcription Factor, Ets-1"/>
    <property type="match status" value="3"/>
</dbReference>
<dbReference type="InterPro" id="IPR029515">
    <property type="entry name" value="Liprin"/>
</dbReference>
<dbReference type="InterPro" id="IPR037617">
    <property type="entry name" value="Liprin-beta_SAM_rpt_1"/>
</dbReference>
<dbReference type="InterPro" id="IPR037618">
    <property type="entry name" value="Liprin-beta_SAM_rpt_2"/>
</dbReference>
<dbReference type="InterPro" id="IPR037619">
    <property type="entry name" value="Liprin-beta_SAM_rpt_3"/>
</dbReference>
<dbReference type="InterPro" id="IPR001660">
    <property type="entry name" value="SAM"/>
</dbReference>
<dbReference type="InterPro" id="IPR013761">
    <property type="entry name" value="SAM/pointed_sf"/>
</dbReference>
<dbReference type="PANTHER" id="PTHR12587">
    <property type="entry name" value="LAR INTERACTING PROTEIN LIP -RELATED PROTEIN"/>
    <property type="match status" value="1"/>
</dbReference>
<dbReference type="PANTHER" id="PTHR12587:SF16">
    <property type="entry name" value="LIPRIN-BETA-1"/>
    <property type="match status" value="1"/>
</dbReference>
<dbReference type="Pfam" id="PF00536">
    <property type="entry name" value="SAM_1"/>
    <property type="match status" value="2"/>
</dbReference>
<dbReference type="Pfam" id="PF07647">
    <property type="entry name" value="SAM_2"/>
    <property type="match status" value="1"/>
</dbReference>
<dbReference type="SMART" id="SM00454">
    <property type="entry name" value="SAM"/>
    <property type="match status" value="3"/>
</dbReference>
<dbReference type="SUPFAM" id="SSF47769">
    <property type="entry name" value="SAM/Pointed domain"/>
    <property type="match status" value="3"/>
</dbReference>
<dbReference type="PROSITE" id="PS50105">
    <property type="entry name" value="SAM_DOMAIN"/>
    <property type="match status" value="2"/>
</dbReference>
<gene>
    <name type="primary">PPFIBP1</name>
    <name type="synonym">KIAA1230</name>
</gene>
<protein>
    <recommendedName>
        <fullName>Liprin-beta-1</fullName>
    </recommendedName>
    <alternativeName>
        <fullName>Protein tyrosine phosphatase receptor type f polypeptide-interacting protein-binding protein 1</fullName>
        <shortName>PTPRF-interacting protein-binding protein 1</shortName>
    </alternativeName>
    <alternativeName>
        <fullName>hSGT2</fullName>
    </alternativeName>
</protein>
<comment type="function">
    <text evidence="11">May regulate the disassembly of focal adhesions. Did not bind receptor-like tyrosine phosphatases type 2A.</text>
</comment>
<comment type="subunit">
    <text evidence="6 8 9">Forms homodimers and heterodimers. Interacts with S100A4 in a Ca(2+)-dependent mode (PubMed:11836260). Part of a cortical microtubule stabilization complex (CMSC) composed of KANK1, PPFIA1, PPFIBP1, ERC1/ELKS, PHLDB2/LL5beta, CLASPs, KIF21A and possibly additional interactors; within CMSCs KANK1 and PHLDB2/LL5beta seem to be the core components for recruiting microtubule-binding proteins KIF21A and CLASPs, whereas PPFIA1, PPFIBP1 and ERC1/ELKS serve as scaffolds for protein clustering. Interacts with KANK1 (via CC1 domain, residues 244-339) (PubMed:24120883, PubMed:27410476).</text>
</comment>
<comment type="interaction">
    <interactant intactId="EBI-1045582">
        <id>Q86W92</id>
    </interactant>
    <interactant intactId="EBI-348489">
        <id>P40425</id>
        <label>PBX2</label>
    </interactant>
    <organismsDiffer>false</organismsDiffer>
    <experiments>3</experiments>
</comment>
<comment type="interaction">
    <interactant intactId="EBI-1045582">
        <id>Q86W92</id>
    </interactant>
    <interactant intactId="EBI-476295">
        <id>P31947</id>
        <label>SFN</label>
    </interactant>
    <organismsDiffer>false</organismsDiffer>
    <experiments>4</experiments>
</comment>
<comment type="interaction">
    <interactant intactId="EBI-1045582">
        <id>Q86W92</id>
    </interactant>
    <interactant intactId="EBI-356498">
        <id>P62258</id>
        <label>YWHAE</label>
    </interactant>
    <organismsDiffer>false</organismsDiffer>
    <experiments>5</experiments>
</comment>
<comment type="interaction">
    <interactant intactId="EBI-1045582">
        <id>Q86W92</id>
    </interactant>
    <interactant intactId="EBI-347088">
        <id>P63104</id>
        <label>YWHAZ</label>
    </interactant>
    <organismsDiffer>false</organismsDiffer>
    <experiments>4</experiments>
</comment>
<comment type="interaction">
    <interactant intactId="EBI-1045582">
        <id>Q86W92</id>
    </interactant>
    <interactant intactId="EBI-25492395">
        <id>PRO_0000449633</id>
        <label>rep</label>
        <dbReference type="UniProtKB" id="P0DTD1"/>
    </interactant>
    <organismsDiffer>true</organismsDiffer>
    <experiments>4</experiments>
</comment>
<comment type="subcellular location">
    <subcellularLocation>
        <location evidence="8">Cytoplasm</location>
        <location evidence="8">Cell cortex</location>
    </subcellularLocation>
</comment>
<comment type="alternative products">
    <event type="alternative splicing"/>
    <isoform>
        <id>Q86W92-1</id>
        <name>1</name>
        <sequence type="displayed"/>
    </isoform>
    <isoform>
        <id>Q86W92-2</id>
        <name>2</name>
        <sequence type="described" ref="VSP_009397 VSP_009398 VSP_009399 VSP_009400"/>
    </isoform>
    <isoform>
        <id>Q86W92-3</id>
        <name>3</name>
        <sequence type="described" ref="VSP_009394"/>
    </isoform>
    <isoform>
        <id>Q86W92-4</id>
        <name>4</name>
        <sequence type="described" ref="VSP_009397"/>
    </isoform>
    <isoform>
        <id>Q86W92-5</id>
        <name>5</name>
        <name>L2</name>
        <sequence type="described" ref="VSP_009395 VSP_009396"/>
    </isoform>
</comment>
<comment type="tissue specificity">
    <text evidence="11">Widely expressed. Absent in liver.</text>
</comment>
<comment type="domain">
    <text evidence="6">The N-terminal coiled coil regions mediate homodimerization preferentially and heterodimerization type beta/beta. The C-terminal, non-coiled coil regions mediate heterodimerization type beta/alpha and interaction with S100A4.</text>
</comment>
<comment type="disease" evidence="10">
    <disease id="DI-06498">
        <name>Neurodevelopmental disorder with seizures, microcephaly, and brain abnormalities</name>
        <acronym>NEDSMBA</acronym>
        <description>An autosomal recessive disorder characterized by global developmental delay, severe to profound intellectual disability, progressive microcephaly, refractory early-onset epilepsy, white matter abnormalities, and periventricular calcifications.</description>
        <dbReference type="MIM" id="620024"/>
    </disease>
    <text>The disease is caused by variants affecting the gene represented in this entry.</text>
</comment>
<comment type="miscellaneous">
    <molecule>Isoform 5</molecule>
    <text evidence="19">Due to intron retention.</text>
</comment>
<comment type="similarity">
    <text evidence="19">Belongs to the liprin family. Liprin-beta subfamily.</text>
</comment>
<comment type="sequence caution" evidence="19">
    <conflict type="erroneous initiation">
        <sequence resource="EMBL-CDS" id="AAH46159"/>
    </conflict>
    <text>Truncated N-terminus.</text>
</comment>
<comment type="sequence caution" evidence="19">
    <conflict type="erroneous initiation">
        <sequence resource="EMBL-CDS" id="BAA86544"/>
    </conflict>
    <text>Extended N-terminus.</text>
</comment>
<proteinExistence type="evidence at protein level"/>
<feature type="chain" id="PRO_0000191034" description="Liprin-beta-1">
    <location>
        <begin position="1"/>
        <end position="1011"/>
    </location>
</feature>
<feature type="domain" description="SAM 1" evidence="3">
    <location>
        <begin position="647"/>
        <end position="711"/>
    </location>
</feature>
<feature type="domain" description="SAM 2" evidence="3">
    <location>
        <begin position="719"/>
        <end position="782"/>
    </location>
</feature>
<feature type="domain" description="SAM 3" evidence="3">
    <location>
        <begin position="804"/>
        <end position="876"/>
    </location>
</feature>
<feature type="region of interest" description="Disordered" evidence="4">
    <location>
        <begin position="420"/>
        <end position="439"/>
    </location>
</feature>
<feature type="region of interest" description="Disordered" evidence="4">
    <location>
        <begin position="463"/>
        <end position="634"/>
    </location>
</feature>
<feature type="coiled-coil region" evidence="2">
    <location>
        <begin position="156"/>
        <end position="405"/>
    </location>
</feature>
<feature type="compositionally biased region" description="Basic and acidic residues" evidence="4">
    <location>
        <begin position="470"/>
        <end position="492"/>
    </location>
</feature>
<feature type="compositionally biased region" description="Basic and acidic residues" evidence="4">
    <location>
        <begin position="546"/>
        <end position="556"/>
    </location>
</feature>
<feature type="compositionally biased region" description="Basic residues" evidence="4">
    <location>
        <begin position="584"/>
        <end position="598"/>
    </location>
</feature>
<feature type="modified residue" description="Phosphoserine" evidence="20 23">
    <location>
        <position position="37"/>
    </location>
</feature>
<feature type="modified residue" description="Phosphothreonine" evidence="20">
    <location>
        <position position="39"/>
    </location>
</feature>
<feature type="modified residue" description="Phosphoserine" evidence="20 23">
    <location>
        <position position="40"/>
    </location>
</feature>
<feature type="modified residue" description="N6-acetyllysine" evidence="21">
    <location>
        <position position="322"/>
    </location>
</feature>
<feature type="modified residue" description="Phosphoserine" evidence="1">
    <location>
        <position position="434"/>
    </location>
</feature>
<feature type="modified residue" description="Phosphoserine" evidence="20 26">
    <location>
        <position position="466"/>
    </location>
</feature>
<feature type="modified residue" description="Phosphoserine" evidence="25 26">
    <location>
        <position position="540"/>
    </location>
</feature>
<feature type="modified residue" description="Phosphoserine" evidence="20">
    <location>
        <position position="579"/>
    </location>
</feature>
<feature type="modified residue" description="Phosphoserine" evidence="20 22 25">
    <location>
        <position position="601"/>
    </location>
</feature>
<feature type="modified residue" description="Phosphoserine" evidence="1">
    <location>
        <position position="636"/>
    </location>
</feature>
<feature type="modified residue" description="Phosphoserine" evidence="25 26">
    <location>
        <position position="794"/>
    </location>
</feature>
<feature type="modified residue" description="Phosphoserine" evidence="20 23 24">
    <location>
        <position position="999"/>
    </location>
</feature>
<feature type="modified residue" description="Phosphoserine" evidence="20 23">
    <location>
        <position position="1001"/>
    </location>
</feature>
<feature type="modified residue" description="Phosphoserine" evidence="20">
    <location>
        <position position="1003"/>
    </location>
</feature>
<feature type="modified residue" description="Phosphothreonine" evidence="20">
    <location>
        <position position="1005"/>
    </location>
</feature>
<feature type="cross-link" description="Glycyl lysine isopeptide (Lys-Gly) (interchain with G-Cter in SUMO2)" evidence="27">
    <location>
        <position position="471"/>
    </location>
</feature>
<feature type="splice variant" id="VSP_009394" description="In isoform 3." evidence="14">
    <location>
        <begin position="1"/>
        <end position="153"/>
    </location>
</feature>
<feature type="splice variant" id="VSP_009395" description="In isoform 5." evidence="17 18">
    <original>ELLSRTSLETQKL</original>
    <variation>VCAEARTKMGFPC</variation>
    <location>
        <begin position="158"/>
        <end position="170"/>
    </location>
</feature>
<feature type="splice variant" id="VSP_009396" description="In isoform 5." evidence="17 18">
    <location>
        <begin position="171"/>
        <end position="1011"/>
    </location>
</feature>
<feature type="splice variant" id="VSP_009397" description="In isoform 2 and isoform 4." evidence="15 16">
    <location>
        <begin position="233"/>
        <end position="263"/>
    </location>
</feature>
<feature type="splice variant" id="VSP_009398" description="In isoform 2." evidence="16">
    <original>D</original>
    <variation>DENFKKKLKEKN</variation>
    <location>
        <position position="302"/>
    </location>
</feature>
<feature type="splice variant" id="VSP_009399" description="In isoform 2." evidence="16">
    <original>K</original>
    <variation>KKGK</variation>
    <location>
        <position position="349"/>
    </location>
</feature>
<feature type="splice variant" id="VSP_009400" description="In isoform 2." evidence="16">
    <original>L</original>
    <variation>LDRKRSASAPTL</variation>
    <location>
        <position position="544"/>
    </location>
</feature>
<feature type="sequence variant" id="VAR_087715" description="In NEDSMBA." evidence="10">
    <location>
        <begin position="135"/>
        <end position="1011"/>
    </location>
</feature>
<feature type="sequence variant" id="VAR_017758" description="In dbSNP:rs2194816." evidence="5 7 11 12 13">
    <original>V</original>
    <variation>L</variation>
    <location>
        <position position="148"/>
    </location>
</feature>
<feature type="sequence variant" id="VAR_087716" description="In NEDSMBA." evidence="10">
    <location>
        <begin position="451"/>
        <end position="1011"/>
    </location>
</feature>
<feature type="sequence variant" id="VAR_087717" description="In NEDSMBA." evidence="10">
    <location>
        <begin position="507"/>
        <end position="1011"/>
    </location>
</feature>
<feature type="sequence variant" id="VAR_087718" description="In NEDSMBA; uncertain significance; dbSNP:rs2140392469." evidence="10">
    <original>G</original>
    <variation>V</variation>
    <location>
        <position position="732"/>
    </location>
</feature>
<feature type="sequence variant" id="VAR_087719" description="In NEDSMBA." evidence="10">
    <location>
        <begin position="811"/>
        <end position="1011"/>
    </location>
</feature>
<feature type="sequence variant" id="VAR_087720" description="In NEDSMBA." evidence="10">
    <location>
        <begin position="883"/>
        <end position="1011"/>
    </location>
</feature>
<feature type="sequence conflict" description="In Ref. 6; AAH46159." evidence="19" ref="6">
    <original>M</original>
    <variation>K</variation>
    <location>
        <position position="308"/>
    </location>
</feature>
<feature type="sequence conflict" description="In Ref. 1; AAC26103." evidence="19" ref="1">
    <original>C</original>
    <variation>R</variation>
    <location>
        <position position="453"/>
    </location>
</feature>
<feature type="sequence conflict" description="In Ref. 1; AAC26103." evidence="19" ref="1">
    <original>E</original>
    <variation>A</variation>
    <location>
        <position position="553"/>
    </location>
</feature>
<feature type="modified residue" description="Phosphoserine" evidence="20">
    <location sequence="Q86W92-2">
        <position position="523"/>
    </location>
</feature>